<keyword id="KW-0066">ATP synthesis</keyword>
<keyword id="KW-0997">Cell inner membrane</keyword>
<keyword id="KW-1003">Cell membrane</keyword>
<keyword id="KW-0139">CF(1)</keyword>
<keyword id="KW-0375">Hydrogen ion transport</keyword>
<keyword id="KW-0406">Ion transport</keyword>
<keyword id="KW-0472">Membrane</keyword>
<keyword id="KW-1185">Reference proteome</keyword>
<keyword id="KW-0813">Transport</keyword>
<name>ATPG_GEOMG</name>
<dbReference type="EMBL" id="CP000148">
    <property type="protein sequence ID" value="ABB33619.1"/>
    <property type="molecule type" value="Genomic_DNA"/>
</dbReference>
<dbReference type="RefSeq" id="WP_004514214.1">
    <property type="nucleotide sequence ID" value="NC_007517.1"/>
</dbReference>
<dbReference type="SMR" id="Q39Q55"/>
<dbReference type="STRING" id="269799.Gmet_3407"/>
<dbReference type="KEGG" id="gme:Gmet_3407"/>
<dbReference type="eggNOG" id="COG0224">
    <property type="taxonomic scope" value="Bacteria"/>
</dbReference>
<dbReference type="HOGENOM" id="CLU_050669_0_1_7"/>
<dbReference type="Proteomes" id="UP000007073">
    <property type="component" value="Chromosome"/>
</dbReference>
<dbReference type="GO" id="GO:0005886">
    <property type="term" value="C:plasma membrane"/>
    <property type="evidence" value="ECO:0007669"/>
    <property type="project" value="UniProtKB-SubCell"/>
</dbReference>
<dbReference type="GO" id="GO:0045259">
    <property type="term" value="C:proton-transporting ATP synthase complex"/>
    <property type="evidence" value="ECO:0007669"/>
    <property type="project" value="UniProtKB-KW"/>
</dbReference>
<dbReference type="GO" id="GO:0005524">
    <property type="term" value="F:ATP binding"/>
    <property type="evidence" value="ECO:0007669"/>
    <property type="project" value="UniProtKB-UniRule"/>
</dbReference>
<dbReference type="GO" id="GO:0046933">
    <property type="term" value="F:proton-transporting ATP synthase activity, rotational mechanism"/>
    <property type="evidence" value="ECO:0007669"/>
    <property type="project" value="UniProtKB-UniRule"/>
</dbReference>
<dbReference type="GO" id="GO:0042777">
    <property type="term" value="P:proton motive force-driven plasma membrane ATP synthesis"/>
    <property type="evidence" value="ECO:0007669"/>
    <property type="project" value="UniProtKB-UniRule"/>
</dbReference>
<dbReference type="CDD" id="cd12151">
    <property type="entry name" value="F1-ATPase_gamma"/>
    <property type="match status" value="1"/>
</dbReference>
<dbReference type="FunFam" id="1.10.287.80:FF:000001">
    <property type="entry name" value="ATP synthase gamma chain"/>
    <property type="match status" value="1"/>
</dbReference>
<dbReference type="FunFam" id="1.10.287.80:FF:000003">
    <property type="entry name" value="ATP synthase gamma chain, chloroplastic"/>
    <property type="match status" value="1"/>
</dbReference>
<dbReference type="Gene3D" id="3.40.1380.10">
    <property type="match status" value="1"/>
</dbReference>
<dbReference type="Gene3D" id="1.10.287.80">
    <property type="entry name" value="ATP synthase, gamma subunit, helix hairpin domain"/>
    <property type="match status" value="1"/>
</dbReference>
<dbReference type="HAMAP" id="MF_00815">
    <property type="entry name" value="ATP_synth_gamma_bact"/>
    <property type="match status" value="1"/>
</dbReference>
<dbReference type="InterPro" id="IPR035968">
    <property type="entry name" value="ATP_synth_F1_ATPase_gsu"/>
</dbReference>
<dbReference type="InterPro" id="IPR000131">
    <property type="entry name" value="ATP_synth_F1_gsu"/>
</dbReference>
<dbReference type="InterPro" id="IPR023632">
    <property type="entry name" value="ATP_synth_F1_gsu_CS"/>
</dbReference>
<dbReference type="NCBIfam" id="TIGR01146">
    <property type="entry name" value="ATPsyn_F1gamma"/>
    <property type="match status" value="1"/>
</dbReference>
<dbReference type="PANTHER" id="PTHR11693">
    <property type="entry name" value="ATP SYNTHASE GAMMA CHAIN"/>
    <property type="match status" value="1"/>
</dbReference>
<dbReference type="PANTHER" id="PTHR11693:SF22">
    <property type="entry name" value="ATP SYNTHASE SUBUNIT GAMMA, MITOCHONDRIAL"/>
    <property type="match status" value="1"/>
</dbReference>
<dbReference type="Pfam" id="PF00231">
    <property type="entry name" value="ATP-synt"/>
    <property type="match status" value="1"/>
</dbReference>
<dbReference type="PIRSF" id="PIRSF039089">
    <property type="entry name" value="ATP_synthase_gamma"/>
    <property type="match status" value="1"/>
</dbReference>
<dbReference type="PRINTS" id="PR00126">
    <property type="entry name" value="ATPASEGAMMA"/>
</dbReference>
<dbReference type="SUPFAM" id="SSF52943">
    <property type="entry name" value="ATP synthase (F1-ATPase), gamma subunit"/>
    <property type="match status" value="1"/>
</dbReference>
<dbReference type="PROSITE" id="PS00153">
    <property type="entry name" value="ATPASE_GAMMA"/>
    <property type="match status" value="1"/>
</dbReference>
<organism>
    <name type="scientific">Geobacter metallireducens (strain ATCC 53774 / DSM 7210 / GS-15)</name>
    <dbReference type="NCBI Taxonomy" id="269799"/>
    <lineage>
        <taxon>Bacteria</taxon>
        <taxon>Pseudomonadati</taxon>
        <taxon>Thermodesulfobacteriota</taxon>
        <taxon>Desulfuromonadia</taxon>
        <taxon>Geobacterales</taxon>
        <taxon>Geobacteraceae</taxon>
        <taxon>Geobacter</taxon>
    </lineage>
</organism>
<protein>
    <recommendedName>
        <fullName evidence="1">ATP synthase gamma chain</fullName>
    </recommendedName>
    <alternativeName>
        <fullName evidence="1">ATP synthase F1 sector gamma subunit</fullName>
    </alternativeName>
    <alternativeName>
        <fullName evidence="1">F-ATPase gamma subunit</fullName>
    </alternativeName>
</protein>
<sequence>MASLKSIKKRIVSVKNTRQITKAMKMVSAAKLRRAQENVVAARPYAKKLGEVLDRLAKSQDGSSSPLLQKRISQKALLVVVTSDRGLCGGFNANICKAAERFIREKKAEFAEISVTTVGRKGFEFLKNRQKIHKNYGNVLSNLSYPTAALLAQEVVEGYVAEEYDEVYLLFNAFRSVMSQDITLQQLLPIVPEETAEEEYVPEYIYEPSKGELLDELLPKHIEVQVFKALLESVASEHGARMTAMDSASKNATEMIGKLTLQYNRARQAAITTELMEIISGAESIKG</sequence>
<comment type="function">
    <text evidence="1">Produces ATP from ADP in the presence of a proton gradient across the membrane. The gamma chain is believed to be important in regulating ATPase activity and the flow of protons through the CF(0) complex.</text>
</comment>
<comment type="subunit">
    <text evidence="1">F-type ATPases have 2 components, CF(1) - the catalytic core - and CF(0) - the membrane proton channel. CF(1) has five subunits: alpha(3), beta(3), gamma(1), delta(1), epsilon(1). CF(0) has three main subunits: a, b and c.</text>
</comment>
<comment type="subcellular location">
    <subcellularLocation>
        <location evidence="1">Cell inner membrane</location>
        <topology evidence="1">Peripheral membrane protein</topology>
    </subcellularLocation>
</comment>
<comment type="similarity">
    <text evidence="1">Belongs to the ATPase gamma chain family.</text>
</comment>
<feature type="chain" id="PRO_1000053218" description="ATP synthase gamma chain">
    <location>
        <begin position="1"/>
        <end position="287"/>
    </location>
</feature>
<reference key="1">
    <citation type="journal article" date="2009" name="BMC Microbiol.">
        <title>The genome sequence of Geobacter metallireducens: features of metabolism, physiology and regulation common and dissimilar to Geobacter sulfurreducens.</title>
        <authorList>
            <person name="Aklujkar M."/>
            <person name="Krushkal J."/>
            <person name="DiBartolo G."/>
            <person name="Lapidus A."/>
            <person name="Land M.L."/>
            <person name="Lovley D.R."/>
        </authorList>
    </citation>
    <scope>NUCLEOTIDE SEQUENCE [LARGE SCALE GENOMIC DNA]</scope>
    <source>
        <strain>ATCC 53774 / DSM 7210 / GS-15</strain>
    </source>
</reference>
<gene>
    <name evidence="1" type="primary">atpG</name>
    <name type="ordered locus">Gmet_3407</name>
</gene>
<proteinExistence type="inferred from homology"/>
<evidence type="ECO:0000255" key="1">
    <source>
        <dbReference type="HAMAP-Rule" id="MF_00815"/>
    </source>
</evidence>
<accession>Q39Q55</accession>